<accession>A0AIB8</accession>
<evidence type="ECO:0000255" key="1">
    <source>
        <dbReference type="HAMAP-Rule" id="MF_00183"/>
    </source>
</evidence>
<feature type="chain" id="PRO_1000020274" description="1-deoxy-D-xylulose 5-phosphate reductoisomerase">
    <location>
        <begin position="1"/>
        <end position="380"/>
    </location>
</feature>
<feature type="binding site" evidence="1">
    <location>
        <position position="10"/>
    </location>
    <ligand>
        <name>NADPH</name>
        <dbReference type="ChEBI" id="CHEBI:57783"/>
    </ligand>
</feature>
<feature type="binding site" evidence="1">
    <location>
        <position position="11"/>
    </location>
    <ligand>
        <name>NADPH</name>
        <dbReference type="ChEBI" id="CHEBI:57783"/>
    </ligand>
</feature>
<feature type="binding site" evidence="1">
    <location>
        <position position="12"/>
    </location>
    <ligand>
        <name>NADPH</name>
        <dbReference type="ChEBI" id="CHEBI:57783"/>
    </ligand>
</feature>
<feature type="binding site" evidence="1">
    <location>
        <position position="13"/>
    </location>
    <ligand>
        <name>NADPH</name>
        <dbReference type="ChEBI" id="CHEBI:57783"/>
    </ligand>
</feature>
<feature type="binding site" evidence="1">
    <location>
        <position position="36"/>
    </location>
    <ligand>
        <name>NADPH</name>
        <dbReference type="ChEBI" id="CHEBI:57783"/>
    </ligand>
</feature>
<feature type="binding site" evidence="1">
    <location>
        <position position="37"/>
    </location>
    <ligand>
        <name>NADPH</name>
        <dbReference type="ChEBI" id="CHEBI:57783"/>
    </ligand>
</feature>
<feature type="binding site" evidence="1">
    <location>
        <position position="38"/>
    </location>
    <ligand>
        <name>NADPH</name>
        <dbReference type="ChEBI" id="CHEBI:57783"/>
    </ligand>
</feature>
<feature type="binding site" evidence="1">
    <location>
        <position position="120"/>
    </location>
    <ligand>
        <name>NADPH</name>
        <dbReference type="ChEBI" id="CHEBI:57783"/>
    </ligand>
</feature>
<feature type="binding site" evidence="1">
    <location>
        <position position="121"/>
    </location>
    <ligand>
        <name>1-deoxy-D-xylulose 5-phosphate</name>
        <dbReference type="ChEBI" id="CHEBI:57792"/>
    </ligand>
</feature>
<feature type="binding site" evidence="1">
    <location>
        <position position="122"/>
    </location>
    <ligand>
        <name>NADPH</name>
        <dbReference type="ChEBI" id="CHEBI:57783"/>
    </ligand>
</feature>
<feature type="binding site" evidence="1">
    <location>
        <position position="146"/>
    </location>
    <ligand>
        <name>Mn(2+)</name>
        <dbReference type="ChEBI" id="CHEBI:29035"/>
    </ligand>
</feature>
<feature type="binding site" evidence="1">
    <location>
        <position position="147"/>
    </location>
    <ligand>
        <name>1-deoxy-D-xylulose 5-phosphate</name>
        <dbReference type="ChEBI" id="CHEBI:57792"/>
    </ligand>
</feature>
<feature type="binding site" evidence="1">
    <location>
        <position position="148"/>
    </location>
    <ligand>
        <name>1-deoxy-D-xylulose 5-phosphate</name>
        <dbReference type="ChEBI" id="CHEBI:57792"/>
    </ligand>
</feature>
<feature type="binding site" evidence="1">
    <location>
        <position position="148"/>
    </location>
    <ligand>
        <name>Mn(2+)</name>
        <dbReference type="ChEBI" id="CHEBI:29035"/>
    </ligand>
</feature>
<feature type="binding site" evidence="1">
    <location>
        <position position="172"/>
    </location>
    <ligand>
        <name>1-deoxy-D-xylulose 5-phosphate</name>
        <dbReference type="ChEBI" id="CHEBI:57792"/>
    </ligand>
</feature>
<feature type="binding site" evidence="1">
    <location>
        <position position="195"/>
    </location>
    <ligand>
        <name>1-deoxy-D-xylulose 5-phosphate</name>
        <dbReference type="ChEBI" id="CHEBI:57792"/>
    </ligand>
</feature>
<feature type="binding site" evidence="1">
    <location>
        <position position="201"/>
    </location>
    <ligand>
        <name>NADPH</name>
        <dbReference type="ChEBI" id="CHEBI:57783"/>
    </ligand>
</feature>
<feature type="binding site" evidence="1">
    <location>
        <position position="208"/>
    </location>
    <ligand>
        <name>1-deoxy-D-xylulose 5-phosphate</name>
        <dbReference type="ChEBI" id="CHEBI:57792"/>
    </ligand>
</feature>
<feature type="binding site" evidence="1">
    <location>
        <position position="213"/>
    </location>
    <ligand>
        <name>1-deoxy-D-xylulose 5-phosphate</name>
        <dbReference type="ChEBI" id="CHEBI:57792"/>
    </ligand>
</feature>
<feature type="binding site" evidence="1">
    <location>
        <position position="214"/>
    </location>
    <ligand>
        <name>1-deoxy-D-xylulose 5-phosphate</name>
        <dbReference type="ChEBI" id="CHEBI:57792"/>
    </ligand>
</feature>
<feature type="binding site" evidence="1">
    <location>
        <position position="217"/>
    </location>
    <ligand>
        <name>1-deoxy-D-xylulose 5-phosphate</name>
        <dbReference type="ChEBI" id="CHEBI:57792"/>
    </ligand>
</feature>
<feature type="binding site" evidence="1">
    <location>
        <position position="217"/>
    </location>
    <ligand>
        <name>Mn(2+)</name>
        <dbReference type="ChEBI" id="CHEBI:29035"/>
    </ligand>
</feature>
<dbReference type="EC" id="1.1.1.267" evidence="1"/>
<dbReference type="EMBL" id="AM263198">
    <property type="protein sequence ID" value="CAK20750.1"/>
    <property type="molecule type" value="Genomic_DNA"/>
</dbReference>
<dbReference type="RefSeq" id="WP_011702135.1">
    <property type="nucleotide sequence ID" value="NC_008555.1"/>
</dbReference>
<dbReference type="SMR" id="A0AIB8"/>
<dbReference type="STRING" id="386043.lwe1332"/>
<dbReference type="GeneID" id="61189209"/>
<dbReference type="KEGG" id="lwe:lwe1332"/>
<dbReference type="eggNOG" id="COG0743">
    <property type="taxonomic scope" value="Bacteria"/>
</dbReference>
<dbReference type="HOGENOM" id="CLU_035714_4_0_9"/>
<dbReference type="OrthoDB" id="9806546at2"/>
<dbReference type="UniPathway" id="UPA00056">
    <property type="reaction ID" value="UER00092"/>
</dbReference>
<dbReference type="Proteomes" id="UP000000779">
    <property type="component" value="Chromosome"/>
</dbReference>
<dbReference type="GO" id="GO:0030604">
    <property type="term" value="F:1-deoxy-D-xylulose-5-phosphate reductoisomerase activity"/>
    <property type="evidence" value="ECO:0007669"/>
    <property type="project" value="UniProtKB-UniRule"/>
</dbReference>
<dbReference type="GO" id="GO:0030145">
    <property type="term" value="F:manganese ion binding"/>
    <property type="evidence" value="ECO:0007669"/>
    <property type="project" value="TreeGrafter"/>
</dbReference>
<dbReference type="GO" id="GO:0070402">
    <property type="term" value="F:NADPH binding"/>
    <property type="evidence" value="ECO:0007669"/>
    <property type="project" value="InterPro"/>
</dbReference>
<dbReference type="GO" id="GO:0051484">
    <property type="term" value="P:isopentenyl diphosphate biosynthetic process, methylerythritol 4-phosphate pathway involved in terpenoid biosynthetic process"/>
    <property type="evidence" value="ECO:0007669"/>
    <property type="project" value="TreeGrafter"/>
</dbReference>
<dbReference type="FunFam" id="1.10.1740.10:FF:000005">
    <property type="entry name" value="1-deoxy-D-xylulose 5-phosphate reductoisomerase"/>
    <property type="match status" value="1"/>
</dbReference>
<dbReference type="FunFam" id="3.40.50.720:FF:000045">
    <property type="entry name" value="1-deoxy-D-xylulose 5-phosphate reductoisomerase"/>
    <property type="match status" value="1"/>
</dbReference>
<dbReference type="Gene3D" id="1.10.1740.10">
    <property type="match status" value="1"/>
</dbReference>
<dbReference type="Gene3D" id="3.40.50.720">
    <property type="entry name" value="NAD(P)-binding Rossmann-like Domain"/>
    <property type="match status" value="1"/>
</dbReference>
<dbReference type="HAMAP" id="MF_00183">
    <property type="entry name" value="DXP_reductoisom"/>
    <property type="match status" value="1"/>
</dbReference>
<dbReference type="InterPro" id="IPR003821">
    <property type="entry name" value="DXP_reductoisomerase"/>
</dbReference>
<dbReference type="InterPro" id="IPR013644">
    <property type="entry name" value="DXP_reductoisomerase_C"/>
</dbReference>
<dbReference type="InterPro" id="IPR013512">
    <property type="entry name" value="DXP_reductoisomerase_N"/>
</dbReference>
<dbReference type="InterPro" id="IPR026877">
    <property type="entry name" value="DXPR_C"/>
</dbReference>
<dbReference type="InterPro" id="IPR036169">
    <property type="entry name" value="DXPR_C_sf"/>
</dbReference>
<dbReference type="InterPro" id="IPR036291">
    <property type="entry name" value="NAD(P)-bd_dom_sf"/>
</dbReference>
<dbReference type="NCBIfam" id="TIGR00243">
    <property type="entry name" value="Dxr"/>
    <property type="match status" value="1"/>
</dbReference>
<dbReference type="NCBIfam" id="NF009114">
    <property type="entry name" value="PRK12464.1"/>
    <property type="match status" value="1"/>
</dbReference>
<dbReference type="PANTHER" id="PTHR30525">
    <property type="entry name" value="1-DEOXY-D-XYLULOSE 5-PHOSPHATE REDUCTOISOMERASE"/>
    <property type="match status" value="1"/>
</dbReference>
<dbReference type="PANTHER" id="PTHR30525:SF0">
    <property type="entry name" value="1-DEOXY-D-XYLULOSE 5-PHOSPHATE REDUCTOISOMERASE, CHLOROPLASTIC"/>
    <property type="match status" value="1"/>
</dbReference>
<dbReference type="Pfam" id="PF08436">
    <property type="entry name" value="DXP_redisom_C"/>
    <property type="match status" value="1"/>
</dbReference>
<dbReference type="Pfam" id="PF02670">
    <property type="entry name" value="DXP_reductoisom"/>
    <property type="match status" value="1"/>
</dbReference>
<dbReference type="Pfam" id="PF13288">
    <property type="entry name" value="DXPR_C"/>
    <property type="match status" value="1"/>
</dbReference>
<dbReference type="PIRSF" id="PIRSF006205">
    <property type="entry name" value="Dxp_reductismrs"/>
    <property type="match status" value="1"/>
</dbReference>
<dbReference type="SUPFAM" id="SSF69055">
    <property type="entry name" value="1-deoxy-D-xylulose-5-phosphate reductoisomerase, C-terminal domain"/>
    <property type="match status" value="1"/>
</dbReference>
<dbReference type="SUPFAM" id="SSF55347">
    <property type="entry name" value="Glyceraldehyde-3-phosphate dehydrogenase-like, C-terminal domain"/>
    <property type="match status" value="1"/>
</dbReference>
<dbReference type="SUPFAM" id="SSF51735">
    <property type="entry name" value="NAD(P)-binding Rossmann-fold domains"/>
    <property type="match status" value="1"/>
</dbReference>
<reference key="1">
    <citation type="journal article" date="2006" name="J. Bacteriol.">
        <title>Whole-genome sequence of Listeria welshimeri reveals common steps in genome reduction with Listeria innocua as compared to Listeria monocytogenes.</title>
        <authorList>
            <person name="Hain T."/>
            <person name="Steinweg C."/>
            <person name="Kuenne C.T."/>
            <person name="Billion A."/>
            <person name="Ghai R."/>
            <person name="Chatterjee S.S."/>
            <person name="Domann E."/>
            <person name="Kaerst U."/>
            <person name="Goesmann A."/>
            <person name="Bekel T."/>
            <person name="Bartels D."/>
            <person name="Kaiser O."/>
            <person name="Meyer F."/>
            <person name="Puehler A."/>
            <person name="Weisshaar B."/>
            <person name="Wehland J."/>
            <person name="Liang C."/>
            <person name="Dandekar T."/>
            <person name="Lampidis R."/>
            <person name="Kreft J."/>
            <person name="Goebel W."/>
            <person name="Chakraborty T."/>
        </authorList>
    </citation>
    <scope>NUCLEOTIDE SEQUENCE [LARGE SCALE GENOMIC DNA]</scope>
    <source>
        <strain>ATCC 35897 / DSM 20650 / CCUG 15529 / CIP 8149 / NCTC 11857 / SLCC 5334 / V8</strain>
    </source>
</reference>
<name>DXR_LISW6</name>
<proteinExistence type="inferred from homology"/>
<gene>
    <name evidence="1" type="primary">dxr</name>
    <name type="ordered locus">lwe1332</name>
</gene>
<sequence>MKKIILLGATGSIGTQTLAIIRENPEKFQLVALSFGRNMERGRAIIQEFKPKMVAVWHTRDRITLESEFPNVKFFNGLEGLREVATYLDGDVLLNAVMGSVGLLPTLDAIEAGKSIAIANKETLVTAGHIVMRAAREKNISLLPVDSEHSAILQALNGENPERIEKLVLTASGGSFRDKTRGELSEVTVKEALKHPNWNMGNKLTIDSATMFNKGLEVMEAHWLFGVDYDDIEVVIQRESIVHSMVQFVDGSFIAQLGTPDMRMPIQYALTYPDRLFIPYEKNFRITDFSALHFEKVDYERFPALKLAYNAGKIGGTMPTVLNAANEIAVAGFLNGQVAFYNIEALVENALNRHTSISEPDLDTILQVDQETRAYVKTLL</sequence>
<protein>
    <recommendedName>
        <fullName evidence="1">1-deoxy-D-xylulose 5-phosphate reductoisomerase</fullName>
        <shortName evidence="1">DXP reductoisomerase</shortName>
        <ecNumber evidence="1">1.1.1.267</ecNumber>
    </recommendedName>
    <alternativeName>
        <fullName evidence="1">1-deoxyxylulose-5-phosphate reductoisomerase</fullName>
    </alternativeName>
    <alternativeName>
        <fullName evidence="1">2-C-methyl-D-erythritol 4-phosphate synthase</fullName>
    </alternativeName>
</protein>
<keyword id="KW-0414">Isoprene biosynthesis</keyword>
<keyword id="KW-0464">Manganese</keyword>
<keyword id="KW-0479">Metal-binding</keyword>
<keyword id="KW-0521">NADP</keyword>
<keyword id="KW-0560">Oxidoreductase</keyword>
<organism>
    <name type="scientific">Listeria welshimeri serovar 6b (strain ATCC 35897 / DSM 20650 / CCUG 15529 / CIP 8149 / NCTC 11857 / SLCC 5334 / V8)</name>
    <dbReference type="NCBI Taxonomy" id="386043"/>
    <lineage>
        <taxon>Bacteria</taxon>
        <taxon>Bacillati</taxon>
        <taxon>Bacillota</taxon>
        <taxon>Bacilli</taxon>
        <taxon>Bacillales</taxon>
        <taxon>Listeriaceae</taxon>
        <taxon>Listeria</taxon>
    </lineage>
</organism>
<comment type="function">
    <text evidence="1">Catalyzes the NADPH-dependent rearrangement and reduction of 1-deoxy-D-xylulose-5-phosphate (DXP) to 2-C-methyl-D-erythritol 4-phosphate (MEP).</text>
</comment>
<comment type="catalytic activity">
    <reaction evidence="1">
        <text>2-C-methyl-D-erythritol 4-phosphate + NADP(+) = 1-deoxy-D-xylulose 5-phosphate + NADPH + H(+)</text>
        <dbReference type="Rhea" id="RHEA:13717"/>
        <dbReference type="ChEBI" id="CHEBI:15378"/>
        <dbReference type="ChEBI" id="CHEBI:57783"/>
        <dbReference type="ChEBI" id="CHEBI:57792"/>
        <dbReference type="ChEBI" id="CHEBI:58262"/>
        <dbReference type="ChEBI" id="CHEBI:58349"/>
        <dbReference type="EC" id="1.1.1.267"/>
    </reaction>
    <physiologicalReaction direction="right-to-left" evidence="1">
        <dbReference type="Rhea" id="RHEA:13719"/>
    </physiologicalReaction>
</comment>
<comment type="cofactor">
    <cofactor evidence="1">
        <name>Mg(2+)</name>
        <dbReference type="ChEBI" id="CHEBI:18420"/>
    </cofactor>
    <cofactor evidence="1">
        <name>Mn(2+)</name>
        <dbReference type="ChEBI" id="CHEBI:29035"/>
    </cofactor>
</comment>
<comment type="pathway">
    <text evidence="1">Isoprenoid biosynthesis; isopentenyl diphosphate biosynthesis via DXP pathway; isopentenyl diphosphate from 1-deoxy-D-xylulose 5-phosphate: step 1/6.</text>
</comment>
<comment type="similarity">
    <text evidence="1">Belongs to the DXR family.</text>
</comment>